<protein>
    <recommendedName>
        <fullName>Nucleolar GTP-binding protein 2</fullName>
    </recommendedName>
</protein>
<keyword id="KW-0342">GTP-binding</keyword>
<keyword id="KW-0547">Nucleotide-binding</keyword>
<keyword id="KW-0539">Nucleus</keyword>
<keyword id="KW-1185">Reference proteome</keyword>
<keyword id="KW-0690">Ribosome biogenesis</keyword>
<reference key="1">
    <citation type="journal article" date="2004" name="Nature">
        <title>Genome evolution in yeasts.</title>
        <authorList>
            <person name="Dujon B."/>
            <person name="Sherman D."/>
            <person name="Fischer G."/>
            <person name="Durrens P."/>
            <person name="Casaregola S."/>
            <person name="Lafontaine I."/>
            <person name="de Montigny J."/>
            <person name="Marck C."/>
            <person name="Neuveglise C."/>
            <person name="Talla E."/>
            <person name="Goffard N."/>
            <person name="Frangeul L."/>
            <person name="Aigle M."/>
            <person name="Anthouard V."/>
            <person name="Babour A."/>
            <person name="Barbe V."/>
            <person name="Barnay S."/>
            <person name="Blanchin S."/>
            <person name="Beckerich J.-M."/>
            <person name="Beyne E."/>
            <person name="Bleykasten C."/>
            <person name="Boisrame A."/>
            <person name="Boyer J."/>
            <person name="Cattolico L."/>
            <person name="Confanioleri F."/>
            <person name="de Daruvar A."/>
            <person name="Despons L."/>
            <person name="Fabre E."/>
            <person name="Fairhead C."/>
            <person name="Ferry-Dumazet H."/>
            <person name="Groppi A."/>
            <person name="Hantraye F."/>
            <person name="Hennequin C."/>
            <person name="Jauniaux N."/>
            <person name="Joyet P."/>
            <person name="Kachouri R."/>
            <person name="Kerrest A."/>
            <person name="Koszul R."/>
            <person name="Lemaire M."/>
            <person name="Lesur I."/>
            <person name="Ma L."/>
            <person name="Muller H."/>
            <person name="Nicaud J.-M."/>
            <person name="Nikolski M."/>
            <person name="Oztas S."/>
            <person name="Ozier-Kalogeropoulos O."/>
            <person name="Pellenz S."/>
            <person name="Potier S."/>
            <person name="Richard G.-F."/>
            <person name="Straub M.-L."/>
            <person name="Suleau A."/>
            <person name="Swennen D."/>
            <person name="Tekaia F."/>
            <person name="Wesolowski-Louvel M."/>
            <person name="Westhof E."/>
            <person name="Wirth B."/>
            <person name="Zeniou-Meyer M."/>
            <person name="Zivanovic Y."/>
            <person name="Bolotin-Fukuhara M."/>
            <person name="Thierry A."/>
            <person name="Bouchier C."/>
            <person name="Caudron B."/>
            <person name="Scarpelli C."/>
            <person name="Gaillardin C."/>
            <person name="Weissenbach J."/>
            <person name="Wincker P."/>
            <person name="Souciet J.-L."/>
        </authorList>
    </citation>
    <scope>NUCLEOTIDE SEQUENCE [LARGE SCALE GENOMIC DNA]</scope>
    <source>
        <strain>ATCC 8585 / CBS 2359 / DSM 70799 / NBRC 1267 / NRRL Y-1140 / WM37</strain>
    </source>
</reference>
<dbReference type="EMBL" id="CR382123">
    <property type="protein sequence ID" value="CAH01891.1"/>
    <property type="molecule type" value="Genomic_DNA"/>
</dbReference>
<dbReference type="RefSeq" id="XP_453040.1">
    <property type="nucleotide sequence ID" value="XM_453040.1"/>
</dbReference>
<dbReference type="SMR" id="Q6CSP9"/>
<dbReference type="FunCoup" id="Q6CSP9">
    <property type="interactions" value="959"/>
</dbReference>
<dbReference type="STRING" id="284590.Q6CSP9"/>
<dbReference type="PaxDb" id="284590-Q6CSP9"/>
<dbReference type="KEGG" id="kla:KLLA0_C18843g"/>
<dbReference type="eggNOG" id="KOG2423">
    <property type="taxonomic scope" value="Eukaryota"/>
</dbReference>
<dbReference type="HOGENOM" id="CLU_011106_4_0_1"/>
<dbReference type="InParanoid" id="Q6CSP9"/>
<dbReference type="OMA" id="RTQGFNH"/>
<dbReference type="Proteomes" id="UP000000598">
    <property type="component" value="Chromosome C"/>
</dbReference>
<dbReference type="GO" id="GO:0005730">
    <property type="term" value="C:nucleolus"/>
    <property type="evidence" value="ECO:0007669"/>
    <property type="project" value="UniProtKB-SubCell"/>
</dbReference>
<dbReference type="GO" id="GO:0005525">
    <property type="term" value="F:GTP binding"/>
    <property type="evidence" value="ECO:0007669"/>
    <property type="project" value="UniProtKB-KW"/>
</dbReference>
<dbReference type="GO" id="GO:0042254">
    <property type="term" value="P:ribosome biogenesis"/>
    <property type="evidence" value="ECO:0007669"/>
    <property type="project" value="UniProtKB-KW"/>
</dbReference>
<dbReference type="CDD" id="cd01858">
    <property type="entry name" value="NGP_1"/>
    <property type="match status" value="1"/>
</dbReference>
<dbReference type="FunFam" id="3.40.50.300:FF:000559">
    <property type="entry name" value="Nuclear/nucleolar GTPase 2"/>
    <property type="match status" value="1"/>
</dbReference>
<dbReference type="FunFam" id="1.10.1580.10:FF:000005">
    <property type="entry name" value="Nucleolar GTP-binding protein 2"/>
    <property type="match status" value="1"/>
</dbReference>
<dbReference type="Gene3D" id="1.10.1580.10">
    <property type="match status" value="1"/>
</dbReference>
<dbReference type="Gene3D" id="3.40.50.300">
    <property type="entry name" value="P-loop containing nucleotide triphosphate hydrolases"/>
    <property type="match status" value="1"/>
</dbReference>
<dbReference type="InterPro" id="IPR030378">
    <property type="entry name" value="G_CP_dom"/>
</dbReference>
<dbReference type="InterPro" id="IPR024929">
    <property type="entry name" value="GNL2_CP_dom"/>
</dbReference>
<dbReference type="InterPro" id="IPR006073">
    <property type="entry name" value="GTP-bd"/>
</dbReference>
<dbReference type="InterPro" id="IPR023179">
    <property type="entry name" value="GTP-bd_ortho_bundle_sf"/>
</dbReference>
<dbReference type="InterPro" id="IPR012971">
    <property type="entry name" value="NOG2_N_dom"/>
</dbReference>
<dbReference type="InterPro" id="IPR027417">
    <property type="entry name" value="P-loop_NTPase"/>
</dbReference>
<dbReference type="InterPro" id="IPR050755">
    <property type="entry name" value="TRAFAC_YlqF/YawG_RiboMat"/>
</dbReference>
<dbReference type="PANTHER" id="PTHR11089">
    <property type="entry name" value="GTP-BINDING PROTEIN-RELATED"/>
    <property type="match status" value="1"/>
</dbReference>
<dbReference type="PANTHER" id="PTHR11089:SF9">
    <property type="entry name" value="NUCLEOLAR GTP-BINDING PROTEIN 2"/>
    <property type="match status" value="1"/>
</dbReference>
<dbReference type="Pfam" id="PF01926">
    <property type="entry name" value="MMR_HSR1"/>
    <property type="match status" value="1"/>
</dbReference>
<dbReference type="Pfam" id="PF08153">
    <property type="entry name" value="NGP1NT"/>
    <property type="match status" value="1"/>
</dbReference>
<dbReference type="PRINTS" id="PR00326">
    <property type="entry name" value="GTP1OBG"/>
</dbReference>
<dbReference type="SUPFAM" id="SSF52540">
    <property type="entry name" value="P-loop containing nucleoside triphosphate hydrolases"/>
    <property type="match status" value="1"/>
</dbReference>
<dbReference type="PROSITE" id="PS51721">
    <property type="entry name" value="G_CP"/>
    <property type="match status" value="1"/>
</dbReference>
<feature type="chain" id="PRO_0000215812" description="Nucleolar GTP-binding protein 2">
    <location>
        <begin position="1"/>
        <end position="513"/>
    </location>
</feature>
<feature type="domain" description="CP-type G" evidence="3">
    <location>
        <begin position="211"/>
        <end position="372"/>
    </location>
</feature>
<feature type="region of interest" description="Disordered" evidence="4">
    <location>
        <begin position="1"/>
        <end position="23"/>
    </location>
</feature>
<feature type="region of interest" description="Disordered" evidence="4">
    <location>
        <begin position="459"/>
        <end position="513"/>
    </location>
</feature>
<feature type="compositionally biased region" description="Basic and acidic residues" evidence="4">
    <location>
        <begin position="468"/>
        <end position="486"/>
    </location>
</feature>
<feature type="compositionally biased region" description="Acidic residues" evidence="4">
    <location>
        <begin position="487"/>
        <end position="504"/>
    </location>
</feature>
<feature type="binding site" evidence="2">
    <location>
        <begin position="321"/>
        <end position="328"/>
    </location>
    <ligand>
        <name>GTP</name>
        <dbReference type="ChEBI" id="CHEBI:37565"/>
    </ligand>
</feature>
<feature type="binding site" evidence="2">
    <location>
        <begin position="365"/>
        <end position="369"/>
    </location>
    <ligand>
        <name>GTP</name>
        <dbReference type="ChEBI" id="CHEBI:37565"/>
    </ligand>
</feature>
<accession>Q6CSP9</accession>
<organism>
    <name type="scientific">Kluyveromyces lactis (strain ATCC 8585 / CBS 2359 / DSM 70799 / NBRC 1267 / NRRL Y-1140 / WM37)</name>
    <name type="common">Yeast</name>
    <name type="synonym">Candida sphaerica</name>
    <dbReference type="NCBI Taxonomy" id="284590"/>
    <lineage>
        <taxon>Eukaryota</taxon>
        <taxon>Fungi</taxon>
        <taxon>Dikarya</taxon>
        <taxon>Ascomycota</taxon>
        <taxon>Saccharomycotina</taxon>
        <taxon>Saccharomycetes</taxon>
        <taxon>Saccharomycetales</taxon>
        <taxon>Saccharomycetaceae</taxon>
        <taxon>Kluyveromyces</taxon>
    </lineage>
</organism>
<comment type="function">
    <text evidence="1">GTPase that associates with pre-60S ribosomal subunits in the nucleolus and is required for their nuclear export and maturation.</text>
</comment>
<comment type="subcellular location">
    <subcellularLocation>
        <location evidence="1">Nucleus</location>
        <location evidence="1">Nucleolus</location>
    </subcellularLocation>
</comment>
<comment type="similarity">
    <text evidence="3">Belongs to the TRAFAC class YlqF/YawG GTPase family. NOG2 subfamily.</text>
</comment>
<proteinExistence type="inferred from homology"/>
<sequence>MGTGKKEKQRRIREGNTKDGNLRVKGENFYRDTKRVQFLNMYKGGRSVRNAKGDIIKAAPLQDTAAPTARVAPDRRWFGNTRVISQDSLSHFREALGENKRDSYQVLLRRNKLPMSLLNEKDSAESPTAKILETEPFEQTFGPKAQRKKPRIAASSLEELISSTSTDNKTFEEKQELDSTLGLMGKQEEEDGWTQAAKEAIFHKGQSKRIWNELYKVIDSSDVVIHVLDARDPLGTRCKSVTDYMTNETPHKHLIYVLNKCDLVPTWVAAAWVKHLSKERPTLAFHASITNSFGKGSLIQLLRQFSQLHKDRHQISVGFIGYPNTGKSSIINTLRKKKVCQVAPIPGETKVWQYITLMKRIFLIDCPGIVPPSSKDSEEDILFRGVVRVEHVSHPEQYIPGILKRCKRQHLERTYEISGWKDSVDFIEMIARKQGRLLKGGEPDESGVSKQILNDFNRGKIPWFVPPPEKDKIEEKEPGDKKRPAEENQEDQEEEEKEQEEQEEPVSKKAKKE</sequence>
<gene>
    <name type="primary">NOG2</name>
    <name type="ordered locus">KLLA0C18843g</name>
</gene>
<name>NOG2_KLULA</name>
<evidence type="ECO:0000250" key="1"/>
<evidence type="ECO:0000255" key="2"/>
<evidence type="ECO:0000255" key="3">
    <source>
        <dbReference type="PROSITE-ProRule" id="PRU01058"/>
    </source>
</evidence>
<evidence type="ECO:0000256" key="4">
    <source>
        <dbReference type="SAM" id="MobiDB-lite"/>
    </source>
</evidence>